<proteinExistence type="inferred from homology"/>
<comment type="function">
    <text evidence="1 2">G protein-coupled receptor that plays an important role in immune homeostasis. Acts via its natural ligand GPR15LG, a chemokine-like polypeptide strongly expressed in gastrointestinal tissues. GPR15-GPR15LG signaling axis regulates intestinal homeostasis and inflammation through the migration of immune cells (By similarity). Controls thereby the specific homing of T-cells, particularly FOXP3+ regulatory T-cells (Tregs), to the large intestine lamina propria (By similarity). Also required for skin localization of thymus-derived dendritic epidermal T-cells (By similarity). Plays an important role in mediating cytoprotective function as well as angiogenesis of thrombomodulin (By similarity). Mechanistically, preferentially signals through the Gi/o pathway to inhibit adenylate cyclase activity and activate a phosphatidylinositol-calcium second messenger system that regulates the release of Ca(2+) ions from intracellular stores (By similarity).</text>
</comment>
<comment type="subunit">
    <text evidence="1">Interacts with adapter YWHAE; this interaction promotes ER-to-Golgi transport of GPR15.</text>
</comment>
<comment type="subcellular location">
    <subcellularLocation>
        <location evidence="1">Cell membrane</location>
        <topology evidence="1">Multi-pass membrane protein</topology>
    </subcellularLocation>
</comment>
<comment type="PTM">
    <text evidence="1">Phosphorylation is necessary for YWHAE binding and efficient surface expression.</text>
</comment>
<comment type="PTM">
    <text evidence="1">O-glycosylated. Sialylated O-glycans in the N-terminal tail inhibits binding of GPR15LG.</text>
</comment>
<comment type="PTM">
    <text evidence="1">Sulfation is required for efficient binding of GPR15LG.</text>
</comment>
<comment type="similarity">
    <text evidence="4">Belongs to the G-protein coupled receptor 1 family.</text>
</comment>
<feature type="chain" id="PRO_0000069530" description="G-protein coupled receptor 15">
    <location>
        <begin position="1"/>
        <end position="360"/>
    </location>
</feature>
<feature type="topological domain" description="Extracellular" evidence="3">
    <location>
        <begin position="1"/>
        <end position="33"/>
    </location>
</feature>
<feature type="transmembrane region" description="Helical; Name=1" evidence="3">
    <location>
        <begin position="34"/>
        <end position="54"/>
    </location>
</feature>
<feature type="topological domain" description="Cytoplasmic" evidence="3">
    <location>
        <begin position="55"/>
        <end position="69"/>
    </location>
</feature>
<feature type="transmembrane region" description="Helical; Name=2" evidence="3">
    <location>
        <begin position="70"/>
        <end position="90"/>
    </location>
</feature>
<feature type="topological domain" description="Extracellular" evidence="3">
    <location>
        <begin position="91"/>
        <end position="120"/>
    </location>
</feature>
<feature type="transmembrane region" description="Helical; Name=3" evidence="3">
    <location>
        <begin position="121"/>
        <end position="141"/>
    </location>
</feature>
<feature type="topological domain" description="Cytoplasmic" evidence="3">
    <location>
        <begin position="142"/>
        <end position="149"/>
    </location>
</feature>
<feature type="transmembrane region" description="Helical; Name=4" evidence="3">
    <location>
        <begin position="150"/>
        <end position="170"/>
    </location>
</feature>
<feature type="topological domain" description="Extracellular" evidence="3">
    <location>
        <begin position="171"/>
        <end position="192"/>
    </location>
</feature>
<feature type="transmembrane region" description="Helical; Name=5" evidence="3">
    <location>
        <begin position="193"/>
        <end position="213"/>
    </location>
</feature>
<feature type="topological domain" description="Cytoplasmic" evidence="3">
    <location>
        <begin position="214"/>
        <end position="239"/>
    </location>
</feature>
<feature type="transmembrane region" description="Helical; Name=6" evidence="3">
    <location>
        <begin position="240"/>
        <end position="260"/>
    </location>
</feature>
<feature type="topological domain" description="Extracellular" evidence="3">
    <location>
        <begin position="261"/>
        <end position="284"/>
    </location>
</feature>
<feature type="transmembrane region" description="Helical; Name=7" evidence="3">
    <location>
        <begin position="285"/>
        <end position="305"/>
    </location>
</feature>
<feature type="topological domain" description="Cytoplasmic" evidence="3">
    <location>
        <begin position="306"/>
        <end position="360"/>
    </location>
</feature>
<feature type="modified residue" description="Phosphoserine" evidence="1">
    <location>
        <position position="359"/>
    </location>
</feature>
<protein>
    <recommendedName>
        <fullName>G-protein coupled receptor 15</fullName>
    </recommendedName>
    <alternativeName>
        <fullName>Brother of Bonzo</fullName>
        <shortName>BoB</shortName>
    </alternativeName>
</protein>
<gene>
    <name type="primary">GPR15</name>
</gene>
<name>GPR15_CHLAE</name>
<keyword id="KW-1003">Cell membrane</keyword>
<keyword id="KW-0297">G-protein coupled receptor</keyword>
<keyword id="KW-0472">Membrane</keyword>
<keyword id="KW-0597">Phosphoprotein</keyword>
<keyword id="KW-0675">Receptor</keyword>
<keyword id="KW-0807">Transducer</keyword>
<keyword id="KW-0812">Transmembrane</keyword>
<keyword id="KW-1133">Transmembrane helix</keyword>
<organism>
    <name type="scientific">Chlorocebus aethiops</name>
    <name type="common">Green monkey</name>
    <name type="synonym">Cercopithecus aethiops</name>
    <dbReference type="NCBI Taxonomy" id="9534"/>
    <lineage>
        <taxon>Eukaryota</taxon>
        <taxon>Metazoa</taxon>
        <taxon>Chordata</taxon>
        <taxon>Craniata</taxon>
        <taxon>Vertebrata</taxon>
        <taxon>Euteleostomi</taxon>
        <taxon>Mammalia</taxon>
        <taxon>Eutheria</taxon>
        <taxon>Euarchontoglires</taxon>
        <taxon>Primates</taxon>
        <taxon>Haplorrhini</taxon>
        <taxon>Catarrhini</taxon>
        <taxon>Cercopithecidae</taxon>
        <taxon>Cercopithecinae</taxon>
        <taxon>Chlorocebus</taxon>
    </lineage>
</organism>
<evidence type="ECO:0000250" key="1">
    <source>
        <dbReference type="UniProtKB" id="P49685"/>
    </source>
</evidence>
<evidence type="ECO:0000250" key="2">
    <source>
        <dbReference type="UniProtKB" id="Q0VDU3"/>
    </source>
</evidence>
<evidence type="ECO:0000255" key="3"/>
<evidence type="ECO:0000255" key="4">
    <source>
        <dbReference type="PROSITE-ProRule" id="PRU00521"/>
    </source>
</evidence>
<reference key="1">
    <citation type="journal article" date="1997" name="Nature">
        <title>Expression cloning of new receptors used by simian and human immunodeficiency viruses.</title>
        <authorList>
            <person name="Deng H.K."/>
            <person name="Unutmaz D."/>
            <person name="Kewalramani V.N."/>
            <person name="Littman D.R."/>
        </authorList>
    </citation>
    <scope>NUCLEOTIDE SEQUENCE [GENOMIC DNA]</scope>
</reference>
<dbReference type="EMBL" id="AF007856">
    <property type="protein sequence ID" value="AAB64222.1"/>
    <property type="molecule type" value="Genomic_DNA"/>
</dbReference>
<dbReference type="SMR" id="O18982"/>
<dbReference type="GO" id="GO:0009897">
    <property type="term" value="C:external side of plasma membrane"/>
    <property type="evidence" value="ECO:0007669"/>
    <property type="project" value="TreeGrafter"/>
</dbReference>
<dbReference type="GO" id="GO:0005886">
    <property type="term" value="C:plasma membrane"/>
    <property type="evidence" value="ECO:0000250"/>
    <property type="project" value="UniProtKB"/>
</dbReference>
<dbReference type="GO" id="GO:0019957">
    <property type="term" value="F:C-C chemokine binding"/>
    <property type="evidence" value="ECO:0007669"/>
    <property type="project" value="TreeGrafter"/>
</dbReference>
<dbReference type="GO" id="GO:0016493">
    <property type="term" value="F:C-C chemokine receptor activity"/>
    <property type="evidence" value="ECO:0007669"/>
    <property type="project" value="TreeGrafter"/>
</dbReference>
<dbReference type="GO" id="GO:0001525">
    <property type="term" value="P:angiogenesis"/>
    <property type="evidence" value="ECO:0000250"/>
    <property type="project" value="UniProtKB"/>
</dbReference>
<dbReference type="GO" id="GO:0019722">
    <property type="term" value="P:calcium-mediated signaling"/>
    <property type="evidence" value="ECO:0007669"/>
    <property type="project" value="TreeGrafter"/>
</dbReference>
<dbReference type="GO" id="GO:0060326">
    <property type="term" value="P:cell chemotaxis"/>
    <property type="evidence" value="ECO:0007669"/>
    <property type="project" value="TreeGrafter"/>
</dbReference>
<dbReference type="GO" id="GO:0007186">
    <property type="term" value="P:G protein-coupled receptor signaling pathway"/>
    <property type="evidence" value="ECO:0000250"/>
    <property type="project" value="UniProtKB"/>
</dbReference>
<dbReference type="GO" id="GO:0006955">
    <property type="term" value="P:immune response"/>
    <property type="evidence" value="ECO:0007669"/>
    <property type="project" value="TreeGrafter"/>
</dbReference>
<dbReference type="GO" id="GO:0007204">
    <property type="term" value="P:positive regulation of cytosolic calcium ion concentration"/>
    <property type="evidence" value="ECO:0007669"/>
    <property type="project" value="TreeGrafter"/>
</dbReference>
<dbReference type="FunFam" id="1.20.1070.10:FF:000187">
    <property type="entry name" value="G-protein coupled receptor 15"/>
    <property type="match status" value="1"/>
</dbReference>
<dbReference type="Gene3D" id="1.20.1070.10">
    <property type="entry name" value="Rhodopsin 7-helix transmembrane proteins"/>
    <property type="match status" value="1"/>
</dbReference>
<dbReference type="InterPro" id="IPR050119">
    <property type="entry name" value="CCR1-9-like"/>
</dbReference>
<dbReference type="InterPro" id="IPR000276">
    <property type="entry name" value="GPCR_Rhodpsn"/>
</dbReference>
<dbReference type="InterPro" id="IPR017452">
    <property type="entry name" value="GPCR_Rhodpsn_7TM"/>
</dbReference>
<dbReference type="PANTHER" id="PTHR10489">
    <property type="entry name" value="CELL ADHESION MOLECULE"/>
    <property type="match status" value="1"/>
</dbReference>
<dbReference type="PANTHER" id="PTHR10489:SF954">
    <property type="entry name" value="G PROTEIN-COUPLED RECEPTOR 25"/>
    <property type="match status" value="1"/>
</dbReference>
<dbReference type="Pfam" id="PF00001">
    <property type="entry name" value="7tm_1"/>
    <property type="match status" value="1"/>
</dbReference>
<dbReference type="PRINTS" id="PR00237">
    <property type="entry name" value="GPCRRHODOPSN"/>
</dbReference>
<dbReference type="PRINTS" id="PR01157">
    <property type="entry name" value="P2YPURNOCPTR"/>
</dbReference>
<dbReference type="SMART" id="SM01381">
    <property type="entry name" value="7TM_GPCR_Srsx"/>
    <property type="match status" value="1"/>
</dbReference>
<dbReference type="SUPFAM" id="SSF81321">
    <property type="entry name" value="Family A G protein-coupled receptor-like"/>
    <property type="match status" value="1"/>
</dbReference>
<dbReference type="PROSITE" id="PS00237">
    <property type="entry name" value="G_PROTEIN_RECEP_F1_1"/>
    <property type="match status" value="1"/>
</dbReference>
<dbReference type="PROSITE" id="PS50262">
    <property type="entry name" value="G_PROTEIN_RECEP_F1_2"/>
    <property type="match status" value="1"/>
</dbReference>
<accession>O18982</accession>
<sequence length="360" mass="40774">MDPEETSVYLDYYYATSPNPDIRETHSHVPYTSVFLPVFYIAVFLTGVLGNLVLMGALHFKPGSRRLIDIFIINLAASDFIFLVTLPLWVDKEASLGLWRTGSFLCKGSSYMISVNMHCSVFLLTCMSVDRYLAIVCPVVSRKFRRTDCAYVVCASIWFISCLLGLPTLLSRELTLIDDKPYCAEKKATPLKLIWSLVALIFTFFVPLLSIVTCYCRIARKLCAHYQQSGKHNKKLKKSIKIIFIVVAAFLVSWLPFNTSKLLAIVSGLQQERYFPSAILQLGMEVSGPLAFANSCVNPFIYYIFDSYIRRAIVHCLCPCLKNYDFGSSTETSDSHLTKALSTFIHAEDFTRRRKRSVSL</sequence>